<organism>
    <name type="scientific">Mus musculus</name>
    <name type="common">Mouse</name>
    <dbReference type="NCBI Taxonomy" id="10090"/>
    <lineage>
        <taxon>Eukaryota</taxon>
        <taxon>Metazoa</taxon>
        <taxon>Chordata</taxon>
        <taxon>Craniata</taxon>
        <taxon>Vertebrata</taxon>
        <taxon>Euteleostomi</taxon>
        <taxon>Mammalia</taxon>
        <taxon>Eutheria</taxon>
        <taxon>Euarchontoglires</taxon>
        <taxon>Glires</taxon>
        <taxon>Rodentia</taxon>
        <taxon>Myomorpha</taxon>
        <taxon>Muroidea</taxon>
        <taxon>Muridae</taxon>
        <taxon>Murinae</taxon>
        <taxon>Mus</taxon>
        <taxon>Mus</taxon>
    </lineage>
</organism>
<dbReference type="EMBL" id="BC014702">
    <property type="protein sequence ID" value="AAH14702.1"/>
    <property type="molecule type" value="mRNA"/>
</dbReference>
<dbReference type="EMBL" id="AF056973">
    <property type="protein sequence ID" value="AAC13569.1"/>
    <property type="molecule type" value="Genomic_DNA"/>
</dbReference>
<dbReference type="EMBL" id="AF056972">
    <property type="protein sequence ID" value="AAC13568.1"/>
    <property type="molecule type" value="mRNA"/>
</dbReference>
<dbReference type="EMBL" id="L17074">
    <property type="protein sequence ID" value="AAC37651.1"/>
    <property type="molecule type" value="mRNA"/>
</dbReference>
<dbReference type="CCDS" id="CCDS23922.1"/>
<dbReference type="RefSeq" id="NP_001345777.1">
    <property type="nucleotide sequence ID" value="NM_001358848.2"/>
</dbReference>
<dbReference type="RefSeq" id="NP_001415431.1">
    <property type="nucleotide sequence ID" value="NM_001428502.1"/>
</dbReference>
<dbReference type="RefSeq" id="NP_034441.1">
    <property type="nucleotide sequence ID" value="NM_010311.5"/>
</dbReference>
<dbReference type="RefSeq" id="XP_006513298.1">
    <property type="nucleotide sequence ID" value="XM_006513235.5"/>
</dbReference>
<dbReference type="RefSeq" id="XP_006513299.1">
    <property type="nucleotide sequence ID" value="XM_006513236.2"/>
</dbReference>
<dbReference type="RefSeq" id="XP_006513300.1">
    <property type="nucleotide sequence ID" value="XM_006513237.2"/>
</dbReference>
<dbReference type="SMR" id="O70443"/>
<dbReference type="BioGRID" id="199975">
    <property type="interactions" value="14"/>
</dbReference>
<dbReference type="CORUM" id="O70443"/>
<dbReference type="FunCoup" id="O70443">
    <property type="interactions" value="607"/>
</dbReference>
<dbReference type="IntAct" id="O70443">
    <property type="interactions" value="5"/>
</dbReference>
<dbReference type="MINT" id="O70443"/>
<dbReference type="STRING" id="10090.ENSMUSP00000036087"/>
<dbReference type="GlyGen" id="O70443">
    <property type="glycosylation" value="1 site, 1 O-linked glycan (1 site)"/>
</dbReference>
<dbReference type="iPTMnet" id="O70443"/>
<dbReference type="PhosphoSitePlus" id="O70443"/>
<dbReference type="SwissPalm" id="O70443"/>
<dbReference type="jPOST" id="O70443"/>
<dbReference type="PaxDb" id="10090-ENSMUSP00000036087"/>
<dbReference type="PeptideAtlas" id="O70443"/>
<dbReference type="ProteomicsDB" id="271006"/>
<dbReference type="Antibodypedia" id="222">
    <property type="antibodies" value="338 antibodies from 30 providers"/>
</dbReference>
<dbReference type="DNASU" id="14687"/>
<dbReference type="Ensembl" id="ENSMUST00000037813.5">
    <property type="protein sequence ID" value="ENSMUSP00000036087.5"/>
    <property type="gene ID" value="ENSMUSG00000040009.7"/>
</dbReference>
<dbReference type="Ensembl" id="ENSMUST00000159991.2">
    <property type="protein sequence ID" value="ENSMUSP00000124639.2"/>
    <property type="gene ID" value="ENSMUSG00000040009.7"/>
</dbReference>
<dbReference type="GeneID" id="14687"/>
<dbReference type="KEGG" id="mmu:14687"/>
<dbReference type="UCSC" id="uc007fpt.1">
    <property type="organism name" value="mouse"/>
</dbReference>
<dbReference type="AGR" id="MGI:95780"/>
<dbReference type="CTD" id="2781"/>
<dbReference type="MGI" id="MGI:95780">
    <property type="gene designation" value="Gnaz"/>
</dbReference>
<dbReference type="VEuPathDB" id="HostDB:ENSMUSG00000040009"/>
<dbReference type="eggNOG" id="KOG0082">
    <property type="taxonomic scope" value="Eukaryota"/>
</dbReference>
<dbReference type="GeneTree" id="ENSGT00940000160353"/>
<dbReference type="HOGENOM" id="CLU_014184_6_0_1"/>
<dbReference type="InParanoid" id="O70443"/>
<dbReference type="OMA" id="ANSHWFK"/>
<dbReference type="OrthoDB" id="5817230at2759"/>
<dbReference type="PhylomeDB" id="O70443"/>
<dbReference type="TreeFam" id="TF300673"/>
<dbReference type="Reactome" id="R-MMU-418597">
    <property type="pathway name" value="G alpha (z) signalling events"/>
</dbReference>
<dbReference type="BioGRID-ORCS" id="14687">
    <property type="hits" value="0 hits in 77 CRISPR screens"/>
</dbReference>
<dbReference type="CD-CODE" id="CE726F99">
    <property type="entry name" value="Postsynaptic density"/>
</dbReference>
<dbReference type="PRO" id="PR:O70443"/>
<dbReference type="Proteomes" id="UP000000589">
    <property type="component" value="Chromosome 10"/>
</dbReference>
<dbReference type="RNAct" id="O70443">
    <property type="molecule type" value="protein"/>
</dbReference>
<dbReference type="Bgee" id="ENSMUSG00000040009">
    <property type="expression patterns" value="Expressed in ventromedial nucleus of hypothalamus and 185 other cell types or tissues"/>
</dbReference>
<dbReference type="ExpressionAtlas" id="O70443">
    <property type="expression patterns" value="baseline and differential"/>
</dbReference>
<dbReference type="GO" id="GO:0044297">
    <property type="term" value="C:cell body"/>
    <property type="evidence" value="ECO:0000314"/>
    <property type="project" value="MGI"/>
</dbReference>
<dbReference type="GO" id="GO:0030425">
    <property type="term" value="C:dendrite"/>
    <property type="evidence" value="ECO:0000314"/>
    <property type="project" value="MGI"/>
</dbReference>
<dbReference type="GO" id="GO:0005834">
    <property type="term" value="C:heterotrimeric G-protein complex"/>
    <property type="evidence" value="ECO:0000304"/>
    <property type="project" value="MGI"/>
</dbReference>
<dbReference type="GO" id="GO:0016020">
    <property type="term" value="C:membrane"/>
    <property type="evidence" value="ECO:0000304"/>
    <property type="project" value="MGI"/>
</dbReference>
<dbReference type="GO" id="GO:0005886">
    <property type="term" value="C:plasma membrane"/>
    <property type="evidence" value="ECO:0000314"/>
    <property type="project" value="MGI"/>
</dbReference>
<dbReference type="GO" id="GO:0045202">
    <property type="term" value="C:synapse"/>
    <property type="evidence" value="ECO:0000314"/>
    <property type="project" value="SynGO"/>
</dbReference>
<dbReference type="GO" id="GO:0010855">
    <property type="term" value="F:adenylate cyclase inhibitor activity"/>
    <property type="evidence" value="ECO:0000315"/>
    <property type="project" value="MGI"/>
</dbReference>
<dbReference type="GO" id="GO:0031821">
    <property type="term" value="F:G protein-coupled serotonin receptor binding"/>
    <property type="evidence" value="ECO:0007669"/>
    <property type="project" value="Ensembl"/>
</dbReference>
<dbReference type="GO" id="GO:0031683">
    <property type="term" value="F:G-protein beta/gamma-subunit complex binding"/>
    <property type="evidence" value="ECO:0007669"/>
    <property type="project" value="InterPro"/>
</dbReference>
<dbReference type="GO" id="GO:0005525">
    <property type="term" value="F:GTP binding"/>
    <property type="evidence" value="ECO:0007669"/>
    <property type="project" value="UniProtKB-KW"/>
</dbReference>
<dbReference type="GO" id="GO:0003924">
    <property type="term" value="F:GTPase activity"/>
    <property type="evidence" value="ECO:0000304"/>
    <property type="project" value="MGI"/>
</dbReference>
<dbReference type="GO" id="GO:0046872">
    <property type="term" value="F:metal ion binding"/>
    <property type="evidence" value="ECO:0007669"/>
    <property type="project" value="UniProtKB-KW"/>
</dbReference>
<dbReference type="GO" id="GO:0007193">
    <property type="term" value="P:adenylate cyclase-inhibiting G protein-coupled receptor signaling pathway"/>
    <property type="evidence" value="ECO:0007669"/>
    <property type="project" value="Ensembl"/>
</dbReference>
<dbReference type="GO" id="GO:0007186">
    <property type="term" value="P:G protein-coupled receptor signaling pathway"/>
    <property type="evidence" value="ECO:0000304"/>
    <property type="project" value="MGI"/>
</dbReference>
<dbReference type="GO" id="GO:0098664">
    <property type="term" value="P:G protein-coupled serotonin receptor signaling pathway"/>
    <property type="evidence" value="ECO:0000315"/>
    <property type="project" value="MGI"/>
</dbReference>
<dbReference type="GO" id="GO:0046676">
    <property type="term" value="P:negative regulation of insulin secretion"/>
    <property type="evidence" value="ECO:0000315"/>
    <property type="project" value="MGI"/>
</dbReference>
<dbReference type="CDD" id="cd00066">
    <property type="entry name" value="G-alpha"/>
    <property type="match status" value="1"/>
</dbReference>
<dbReference type="FunFam" id="3.40.50.300:FF:002307">
    <property type="entry name" value="Guanine nucleotide-binding protein G(k) subunit alpha"/>
    <property type="match status" value="1"/>
</dbReference>
<dbReference type="FunFam" id="1.10.400.10:FF:000006">
    <property type="entry name" value="Guanine nucleotide-binding protein G(Z) subunit alpha"/>
    <property type="match status" value="1"/>
</dbReference>
<dbReference type="Gene3D" id="1.10.400.10">
    <property type="entry name" value="GI Alpha 1, domain 2-like"/>
    <property type="match status" value="1"/>
</dbReference>
<dbReference type="Gene3D" id="3.40.50.300">
    <property type="entry name" value="P-loop containing nucleotide triphosphate hydrolases"/>
    <property type="match status" value="1"/>
</dbReference>
<dbReference type="InterPro" id="IPR001408">
    <property type="entry name" value="Gprotein_alpha_I"/>
</dbReference>
<dbReference type="InterPro" id="IPR001019">
    <property type="entry name" value="Gprotein_alpha_su"/>
</dbReference>
<dbReference type="InterPro" id="IPR011025">
    <property type="entry name" value="GproteinA_insert"/>
</dbReference>
<dbReference type="InterPro" id="IPR027417">
    <property type="entry name" value="P-loop_NTPase"/>
</dbReference>
<dbReference type="PANTHER" id="PTHR10218">
    <property type="entry name" value="GTP-BINDING PROTEIN ALPHA SUBUNIT"/>
    <property type="match status" value="1"/>
</dbReference>
<dbReference type="PANTHER" id="PTHR10218:SF65">
    <property type="entry name" value="GUANINE NUCLEOTIDE-BINDING PROTEIN G(Z) SUBUNIT ALPHA"/>
    <property type="match status" value="1"/>
</dbReference>
<dbReference type="Pfam" id="PF00503">
    <property type="entry name" value="G-alpha"/>
    <property type="match status" value="1"/>
</dbReference>
<dbReference type="PRINTS" id="PR00318">
    <property type="entry name" value="GPROTEINA"/>
</dbReference>
<dbReference type="PRINTS" id="PR00441">
    <property type="entry name" value="GPROTEINAI"/>
</dbReference>
<dbReference type="SMART" id="SM00275">
    <property type="entry name" value="G_alpha"/>
    <property type="match status" value="1"/>
</dbReference>
<dbReference type="SUPFAM" id="SSF52540">
    <property type="entry name" value="P-loop containing nucleoside triphosphate hydrolases"/>
    <property type="match status" value="1"/>
</dbReference>
<dbReference type="SUPFAM" id="SSF47895">
    <property type="entry name" value="Transducin (alpha subunit), insertion domain"/>
    <property type="match status" value="1"/>
</dbReference>
<dbReference type="PROSITE" id="PS51882">
    <property type="entry name" value="G_ALPHA"/>
    <property type="match status" value="1"/>
</dbReference>
<accession>O70443</accession>
<accession>O70442</accession>
<accession>Q61637</accession>
<accession>Q91WM4</accession>
<feature type="initiator methionine" description="Removed" evidence="5">
    <location>
        <position position="1"/>
    </location>
</feature>
<feature type="chain" id="PRO_0000203697" description="Guanine nucleotide-binding protein G(z) subunit alpha">
    <location>
        <begin position="2"/>
        <end position="355"/>
    </location>
</feature>
<feature type="domain" description="G-alpha" evidence="3">
    <location>
        <begin position="32"/>
        <end position="355"/>
    </location>
</feature>
<feature type="region of interest" description="Disordered" evidence="4">
    <location>
        <begin position="1"/>
        <end position="26"/>
    </location>
</feature>
<feature type="region of interest" description="G1 motif" evidence="3">
    <location>
        <begin position="35"/>
        <end position="48"/>
    </location>
</feature>
<feature type="region of interest" description="G2 motif" evidence="3">
    <location>
        <begin position="174"/>
        <end position="182"/>
    </location>
</feature>
<feature type="region of interest" description="G3 motif" evidence="3">
    <location>
        <begin position="197"/>
        <end position="206"/>
    </location>
</feature>
<feature type="region of interest" description="G4 motif" evidence="3">
    <location>
        <begin position="266"/>
        <end position="273"/>
    </location>
</feature>
<feature type="region of interest" description="G5 motif" evidence="3">
    <location>
        <begin position="325"/>
        <end position="330"/>
    </location>
</feature>
<feature type="compositionally biased region" description="Basic and acidic residues" evidence="4">
    <location>
        <begin position="1"/>
        <end position="14"/>
    </location>
</feature>
<feature type="binding site" evidence="1">
    <location>
        <begin position="40"/>
        <end position="47"/>
    </location>
    <ligand>
        <name>GTP</name>
        <dbReference type="ChEBI" id="CHEBI:37565"/>
    </ligand>
</feature>
<feature type="binding site" evidence="1">
    <location>
        <position position="47"/>
    </location>
    <ligand>
        <name>Mg(2+)</name>
        <dbReference type="ChEBI" id="CHEBI:18420"/>
    </ligand>
</feature>
<feature type="binding site" evidence="1">
    <location>
        <begin position="176"/>
        <end position="182"/>
    </location>
    <ligand>
        <name>GTP</name>
        <dbReference type="ChEBI" id="CHEBI:37565"/>
    </ligand>
</feature>
<feature type="binding site" evidence="1">
    <location>
        <position position="182"/>
    </location>
    <ligand>
        <name>Mg(2+)</name>
        <dbReference type="ChEBI" id="CHEBI:18420"/>
    </ligand>
</feature>
<feature type="binding site" evidence="1">
    <location>
        <begin position="201"/>
        <end position="205"/>
    </location>
    <ligand>
        <name>GTP</name>
        <dbReference type="ChEBI" id="CHEBI:37565"/>
    </ligand>
</feature>
<feature type="binding site" evidence="1">
    <location>
        <begin position="270"/>
        <end position="273"/>
    </location>
    <ligand>
        <name>GTP</name>
        <dbReference type="ChEBI" id="CHEBI:37565"/>
    </ligand>
</feature>
<feature type="binding site" evidence="1">
    <location>
        <position position="327"/>
    </location>
    <ligand>
        <name>GTP</name>
        <dbReference type="ChEBI" id="CHEBI:37565"/>
    </ligand>
</feature>
<feature type="lipid moiety-binding region" description="N-myristoyl glycine" evidence="1">
    <location>
        <position position="2"/>
    </location>
</feature>
<feature type="lipid moiety-binding region" description="S-palmitoyl cysteine" evidence="1">
    <location>
        <position position="3"/>
    </location>
</feature>
<feature type="sequence conflict" description="In Ref. 3; AAC37651." evidence="5" ref="3">
    <original>K</original>
    <variation>R</variation>
    <location>
        <position position="210"/>
    </location>
</feature>
<proteinExistence type="evidence at protein level"/>
<sequence>MGCRQSSEEKEAARRSRRIDRHLRSESQRQRREIKLLLLGTSNSGKSTIVKQMKIIHSGGFNLDACKEYKPLIIYNAIDSLTRIIRALAALKIDFHNPDRAYDAVQLFALTGPAESKGEITPELLGVMRRLWADPGAQACFGRSSEYHLEDNAAYYLNDLERIAAPDYIPTVEDILRSRDMTTGIVENKFTFKELTFKMVDVGGQRSERKKWIHCFEGVTAIIFCVELSGYDLKLYEDNQTSRMAESLRLFDSICNNNWFINTSLILFLNKKDLLAEKIRRIPLSVCFPEYKGQNTYEEAAVYIQRQFEDLNRNKETKEIYSHFTCATDTSNIQFVFDAVTDVIIQNNLKYIGLC</sequence>
<reference key="1">
    <citation type="journal article" date="2004" name="Genome Res.">
        <title>The status, quality, and expansion of the NIH full-length cDNA project: the Mammalian Gene Collection (MGC).</title>
        <authorList>
            <consortium name="The MGC Project Team"/>
        </authorList>
    </citation>
    <scope>NUCLEOTIDE SEQUENCE [LARGE SCALE MRNA]</scope>
    <source>
        <tissue>Eye</tissue>
    </source>
</reference>
<reference key="2">
    <citation type="submission" date="1998-04" db="EMBL/GenBank/DDBJ databases">
        <title>Partial genomic sequence of the mouse GTP binding protein Gz alpha.</title>
        <authorList>
            <person name="Matthaei K.I."/>
            <person name="Mellick A.M."/>
            <person name="Hendry I.A."/>
        </authorList>
    </citation>
    <scope>NUCLEOTIDE SEQUENCE OF 1-353</scope>
    <source>
        <strain>C57BL/6J</strain>
    </source>
</reference>
<reference key="3">
    <citation type="journal article" date="1994" name="Endocrinology">
        <title>Expression of cone transducin, Gz alpha, and other G-protein alpha-subunit messenger ribonucleic acids in pancreatic islets.</title>
        <authorList>
            <person name="Zigman J.M."/>
            <person name="Westermark G.T."/>
            <person name="LaMendola J."/>
            <person name="Steiner D.F."/>
        </authorList>
    </citation>
    <scope>NUCLEOTIDE SEQUENCE [MRNA] OF 207-267</scope>
    <source>
        <strain>BALB/cJ</strain>
        <tissue>Pancreatic islet</tissue>
    </source>
</reference>
<reference key="4">
    <citation type="journal article" date="2010" name="Cell">
        <title>A tissue-specific atlas of mouse protein phosphorylation and expression.</title>
        <authorList>
            <person name="Huttlin E.L."/>
            <person name="Jedrychowski M.P."/>
            <person name="Elias J.E."/>
            <person name="Goswami T."/>
            <person name="Rad R."/>
            <person name="Beausoleil S.A."/>
            <person name="Villen J."/>
            <person name="Haas W."/>
            <person name="Sowa M.E."/>
            <person name="Gygi S.P."/>
        </authorList>
    </citation>
    <scope>IDENTIFICATION BY MASS SPECTROMETRY [LARGE SCALE ANALYSIS]</scope>
    <source>
        <tissue>Brain</tissue>
        <tissue>Spleen</tissue>
    </source>
</reference>
<evidence type="ECO:0000250" key="1"/>
<evidence type="ECO:0000250" key="2">
    <source>
        <dbReference type="UniProtKB" id="P19086"/>
    </source>
</evidence>
<evidence type="ECO:0000255" key="3">
    <source>
        <dbReference type="PROSITE-ProRule" id="PRU01230"/>
    </source>
</evidence>
<evidence type="ECO:0000256" key="4">
    <source>
        <dbReference type="SAM" id="MobiDB-lite"/>
    </source>
</evidence>
<evidence type="ECO:0000305" key="5"/>
<protein>
    <recommendedName>
        <fullName>Guanine nucleotide-binding protein G(z) subunit alpha</fullName>
    </recommendedName>
    <alternativeName>
        <fullName>G(x) alpha chain</fullName>
    </alternativeName>
    <alternativeName>
        <fullName>Gz-alpha</fullName>
    </alternativeName>
</protein>
<comment type="function">
    <text>Guanine nucleotide-binding proteins (G proteins) are involved as modulators or transducers in various transmembrane signaling systems.</text>
</comment>
<comment type="subunit">
    <text evidence="2">G-proteins are composed of 3 units; alpha, beta and gamma. The alpha chain contains the guanine nucleotide binding site. Interacts with ADGRB2 (By similarity).</text>
</comment>
<comment type="subcellular location">
    <subcellularLocation>
        <location>Membrane</location>
        <topology>Lipid-anchor</topology>
    </subcellularLocation>
</comment>
<comment type="similarity">
    <text evidence="5">Belongs to the G-alpha family. G(i/o/t/z) subfamily.</text>
</comment>
<keyword id="KW-0342">GTP-binding</keyword>
<keyword id="KW-0449">Lipoprotein</keyword>
<keyword id="KW-0460">Magnesium</keyword>
<keyword id="KW-0472">Membrane</keyword>
<keyword id="KW-0479">Metal-binding</keyword>
<keyword id="KW-0519">Myristate</keyword>
<keyword id="KW-0547">Nucleotide-binding</keyword>
<keyword id="KW-0564">Palmitate</keyword>
<keyword id="KW-1185">Reference proteome</keyword>
<keyword id="KW-0807">Transducer</keyword>
<gene>
    <name type="primary">Gnaz</name>
</gene>
<name>GNAZ_MOUSE</name>